<accession>Q8MIA3</accession>
<reference key="1">
    <citation type="journal article" date="2003" name="Biochimie">
        <title>The nucleotide-sugar transporter family: a phylogenetic approach.</title>
        <authorList>
            <person name="Martinez-Duncker I."/>
            <person name="Mollicone R."/>
            <person name="Codogno P."/>
            <person name="Oriol R."/>
        </authorList>
    </citation>
    <scope>NUCLEOTIDE SEQUENCE [MRNA]</scope>
</reference>
<sequence length="324" mass="34225">MSVEDGGLPGLGGPGQARWTLMLLLSTATYGAHAPLLALCHVDGRVPFRPSSAVLLTELTKLLLCALSLLVGWQAWPPRTPPWRQAAPFALSALLYGANNNLVIHLQHYMDPSTYQVLSNLKIGSTALFYCLCLRRRLSARQGLALLLLMAAGACYAAGGLRDPGSPLPESPSTAASGPVPLHVTAPGLLLLLLYCLISGLSSVYTELLLKRQRLPLALQNLFLYTFGVLLNLGLHAGGGPGPGLLEGFSGWAALVVLSQALNGLLMSAVMKHGSSITRLFVVSCSLVVNAVLSAALLRLQLTAAFFLAALLIGLAVHLYYGSR</sequence>
<comment type="function">
    <text evidence="2">Mediates the transport of CDP-ribitol (By similarity). Does not exhibit CMP-sialic acid, UDP-galactose and UDP-N-acetylglucosamine transport activity (By similarity).</text>
</comment>
<comment type="catalytic activity">
    <reaction evidence="2">
        <text>CDP-L-ribitol(in) + CDP(out) = CDP-L-ribitol(out) + CDP(in)</text>
        <dbReference type="Rhea" id="RHEA:71579"/>
        <dbReference type="ChEBI" id="CHEBI:57608"/>
        <dbReference type="ChEBI" id="CHEBI:58069"/>
    </reaction>
</comment>
<comment type="subunit">
    <text evidence="2">Found in a complex with SLC35A2 and SLC35A3.</text>
</comment>
<comment type="subcellular location">
    <subcellularLocation>
        <location evidence="1">Golgi apparatus membrane</location>
        <topology evidence="3">Multi-pass membrane protein</topology>
    </subcellularLocation>
</comment>
<comment type="similarity">
    <text evidence="5">Belongs to the nucleotide-sugar transporter family. SLC35A subfamily.</text>
</comment>
<gene>
    <name evidence="2" type="primary">SLC35A4</name>
    <name evidence="4" type="synonym">NST</name>
</gene>
<protein>
    <recommendedName>
        <fullName evidence="5">Probable UDP-sugar transporter protein SLC35A4</fullName>
    </recommendedName>
    <alternativeName>
        <fullName evidence="4">Nucleotide sugar transporter</fullName>
    </alternativeName>
    <alternativeName>
        <fullName evidence="2">Solute carrier family 35 member A4</fullName>
    </alternativeName>
</protein>
<proteinExistence type="evidence at transcript level"/>
<feature type="chain" id="PRO_0000337750" description="Probable UDP-sugar transporter protein SLC35A4">
    <location>
        <begin position="1"/>
        <end position="324"/>
    </location>
</feature>
<feature type="topological domain" description="Cytoplasmic" evidence="2">
    <location>
        <begin position="1"/>
        <end position="18"/>
    </location>
</feature>
<feature type="transmembrane region" description="Helical" evidence="3">
    <location>
        <begin position="19"/>
        <end position="39"/>
    </location>
</feature>
<feature type="topological domain" description="Lumenal" evidence="2">
    <location>
        <begin position="40"/>
        <end position="52"/>
    </location>
</feature>
<feature type="transmembrane region" description="Helical" evidence="3">
    <location>
        <begin position="53"/>
        <end position="73"/>
    </location>
</feature>
<feature type="topological domain" description="Cytoplasmic" evidence="2">
    <location>
        <begin position="74"/>
        <end position="85"/>
    </location>
</feature>
<feature type="transmembrane region" description="Helical" evidence="3">
    <location>
        <begin position="86"/>
        <end position="106"/>
    </location>
</feature>
<feature type="topological domain" description="Lumenal" evidence="2">
    <location>
        <begin position="107"/>
        <end position="140"/>
    </location>
</feature>
<feature type="transmembrane region" description="Helical" evidence="3">
    <location>
        <begin position="141"/>
        <end position="161"/>
    </location>
</feature>
<feature type="topological domain" description="Cytoplasmic" evidence="2">
    <location>
        <begin position="162"/>
        <end position="177"/>
    </location>
</feature>
<feature type="transmembrane region" description="Helical" evidence="3">
    <location>
        <begin position="178"/>
        <end position="198"/>
    </location>
</feature>
<feature type="topological domain" description="Lumenal" evidence="2">
    <location>
        <begin position="199"/>
        <end position="214"/>
    </location>
</feature>
<feature type="transmembrane region" description="Helical" evidence="3">
    <location>
        <begin position="215"/>
        <end position="235"/>
    </location>
</feature>
<feature type="topological domain" description="Cytoplasmic" evidence="2">
    <location>
        <begin position="236"/>
        <end position="248"/>
    </location>
</feature>
<feature type="transmembrane region" description="Helical" evidence="3">
    <location>
        <begin position="249"/>
        <end position="271"/>
    </location>
</feature>
<feature type="topological domain" description="Lumenal" evidence="2">
    <location>
        <begin position="272"/>
        <end position="279"/>
    </location>
</feature>
<feature type="transmembrane region" description="Helical" evidence="3">
    <location>
        <begin position="280"/>
        <end position="300"/>
    </location>
</feature>
<feature type="topological domain" description="Cytoplasmic" evidence="2">
    <location>
        <begin position="301"/>
        <end position="324"/>
    </location>
</feature>
<dbReference type="EMBL" id="AJ489473">
    <property type="protein sequence ID" value="CAD33795.1"/>
    <property type="molecule type" value="mRNA"/>
</dbReference>
<dbReference type="RefSeq" id="NP_999116.1">
    <property type="nucleotide sequence ID" value="NM_213951.2"/>
</dbReference>
<dbReference type="RefSeq" id="XP_005661784.1">
    <property type="nucleotide sequence ID" value="XM_005661727.2"/>
</dbReference>
<dbReference type="RefSeq" id="XP_013850654.1">
    <property type="nucleotide sequence ID" value="XM_013995200.1"/>
</dbReference>
<dbReference type="RefSeq" id="XP_013850655.1">
    <property type="nucleotide sequence ID" value="XM_013995201.1"/>
</dbReference>
<dbReference type="RefSeq" id="XP_013850656.1">
    <property type="nucleotide sequence ID" value="XM_013995202.1"/>
</dbReference>
<dbReference type="SMR" id="Q8MIA3"/>
<dbReference type="FunCoup" id="Q8MIA3">
    <property type="interactions" value="407"/>
</dbReference>
<dbReference type="STRING" id="9823.ENSSSCP00000070453"/>
<dbReference type="PaxDb" id="9823-ENSSSCP00000015284"/>
<dbReference type="Ensembl" id="ENSSSCT00000015697.4">
    <property type="protein sequence ID" value="ENSSSCP00000015284.1"/>
    <property type="gene ID" value="ENSSSCG00000014367.4"/>
</dbReference>
<dbReference type="Ensembl" id="ENSSSCT00015007439.1">
    <property type="protein sequence ID" value="ENSSSCP00015002975.1"/>
    <property type="gene ID" value="ENSSSCG00015005601.1"/>
</dbReference>
<dbReference type="Ensembl" id="ENSSSCT00015007447.1">
    <property type="protein sequence ID" value="ENSSSCP00015002978.1"/>
    <property type="gene ID" value="ENSSSCG00015005601.1"/>
</dbReference>
<dbReference type="Ensembl" id="ENSSSCT00025070453.1">
    <property type="protein sequence ID" value="ENSSSCP00025030421.1"/>
    <property type="gene ID" value="ENSSSCG00025051557.1"/>
</dbReference>
<dbReference type="Ensembl" id="ENSSSCT00025070523.1">
    <property type="protein sequence ID" value="ENSSSCP00025030452.1"/>
    <property type="gene ID" value="ENSSSCG00025051557.1"/>
</dbReference>
<dbReference type="Ensembl" id="ENSSSCT00030043863.1">
    <property type="protein sequence ID" value="ENSSSCP00030019806.1"/>
    <property type="gene ID" value="ENSSSCG00030031676.1"/>
</dbReference>
<dbReference type="Ensembl" id="ENSSSCT00035105570.1">
    <property type="protein sequence ID" value="ENSSSCP00035045362.1"/>
    <property type="gene ID" value="ENSSSCG00035077499.1"/>
</dbReference>
<dbReference type="Ensembl" id="ENSSSCT00035105604.1">
    <property type="protein sequence ID" value="ENSSSCP00035045382.1"/>
    <property type="gene ID" value="ENSSSCG00035077499.1"/>
</dbReference>
<dbReference type="Ensembl" id="ENSSSCT00040089884.1">
    <property type="protein sequence ID" value="ENSSSCP00040039506.1"/>
    <property type="gene ID" value="ENSSSCG00040065848.1"/>
</dbReference>
<dbReference type="Ensembl" id="ENSSSCT00040089957.1">
    <property type="protein sequence ID" value="ENSSSCP00040039538.1"/>
    <property type="gene ID" value="ENSSSCG00040065848.1"/>
</dbReference>
<dbReference type="Ensembl" id="ENSSSCT00045027798.1">
    <property type="protein sequence ID" value="ENSSSCP00045019228.1"/>
    <property type="gene ID" value="ENSSSCG00045016352.1"/>
</dbReference>
<dbReference type="Ensembl" id="ENSSSCT00050107635.1">
    <property type="protein sequence ID" value="ENSSSCP00050047630.1"/>
    <property type="gene ID" value="ENSSSCG00050078140.1"/>
</dbReference>
<dbReference type="Ensembl" id="ENSSSCT00050107658.1">
    <property type="protein sequence ID" value="ENSSSCP00050047642.1"/>
    <property type="gene ID" value="ENSSSCG00050078140.1"/>
</dbReference>
<dbReference type="Ensembl" id="ENSSSCT00055006005.1">
    <property type="protein sequence ID" value="ENSSSCP00055004701.1"/>
    <property type="gene ID" value="ENSSSCG00055003112.1"/>
</dbReference>
<dbReference type="Ensembl" id="ENSSSCT00060053433.1">
    <property type="protein sequence ID" value="ENSSSCP00060022764.1"/>
    <property type="gene ID" value="ENSSSCG00060039495.1"/>
</dbReference>
<dbReference type="Ensembl" id="ENSSSCT00060053438.1">
    <property type="protein sequence ID" value="ENSSSCP00060022767.1"/>
    <property type="gene ID" value="ENSSSCG00060039495.1"/>
</dbReference>
<dbReference type="Ensembl" id="ENSSSCT00065066624.1">
    <property type="protein sequence ID" value="ENSSSCP00065028891.1"/>
    <property type="gene ID" value="ENSSSCG00065048701.1"/>
</dbReference>
<dbReference type="Ensembl" id="ENSSSCT00085038261">
    <property type="protein sequence ID" value="ENSSSCP00085026576"/>
    <property type="gene ID" value="ENSSSCG00085020071"/>
</dbReference>
<dbReference type="Ensembl" id="ENSSSCT00085038263">
    <property type="protein sequence ID" value="ENSSSCP00085026577"/>
    <property type="gene ID" value="ENSSSCG00085020071"/>
</dbReference>
<dbReference type="Ensembl" id="ENSSSCT00085038269">
    <property type="protein sequence ID" value="ENSSSCP00085026582"/>
    <property type="gene ID" value="ENSSSCG00085020071"/>
</dbReference>
<dbReference type="Ensembl" id="ENSSSCT00090052559">
    <property type="protein sequence ID" value="ENSSSCP00090032777"/>
    <property type="gene ID" value="ENSSSCG00090029682"/>
</dbReference>
<dbReference type="Ensembl" id="ENSSSCT00090052570">
    <property type="protein sequence ID" value="ENSSSCP00090032781"/>
    <property type="gene ID" value="ENSSSCG00090029682"/>
</dbReference>
<dbReference type="Ensembl" id="ENSSSCT00090052579">
    <property type="protein sequence ID" value="ENSSSCP00090032786"/>
    <property type="gene ID" value="ENSSSCG00090029682"/>
</dbReference>
<dbReference type="Ensembl" id="ENSSSCT00090052592">
    <property type="protein sequence ID" value="ENSSSCP00090032791"/>
    <property type="gene ID" value="ENSSSCG00090029682"/>
</dbReference>
<dbReference type="Ensembl" id="ENSSSCT00105057438">
    <property type="protein sequence ID" value="ENSSSCP00105040504"/>
    <property type="gene ID" value="ENSSSCG00105030246"/>
</dbReference>
<dbReference type="Ensembl" id="ENSSSCT00105057458">
    <property type="protein sequence ID" value="ENSSSCP00105040523"/>
    <property type="gene ID" value="ENSSSCG00105030246"/>
</dbReference>
<dbReference type="Ensembl" id="ENSSSCT00110021904">
    <property type="protein sequence ID" value="ENSSSCP00110014781"/>
    <property type="gene ID" value="ENSSSCG00110011423"/>
</dbReference>
<dbReference type="Ensembl" id="ENSSSCT00110021911">
    <property type="protein sequence ID" value="ENSSSCP00110014784"/>
    <property type="gene ID" value="ENSSSCG00110011423"/>
</dbReference>
<dbReference type="Ensembl" id="ENSSSCT00115037838">
    <property type="protein sequence ID" value="ENSSSCP00115035740"/>
    <property type="gene ID" value="ENSSSCG00115021373"/>
</dbReference>
<dbReference type="Ensembl" id="ENSSSCT00130057866">
    <property type="protein sequence ID" value="ENSSSCP00130041487"/>
    <property type="gene ID" value="ENSSSCG00130029647"/>
</dbReference>
<dbReference type="Ensembl" id="ENSSSCT00130057881">
    <property type="protein sequence ID" value="ENSSSCP00130041499"/>
    <property type="gene ID" value="ENSSSCG00130029647"/>
</dbReference>
<dbReference type="Ensembl" id="ENSSSCT00130057890">
    <property type="protein sequence ID" value="ENSSSCP00130041505"/>
    <property type="gene ID" value="ENSSSCG00130029647"/>
</dbReference>
<dbReference type="GeneID" id="396994"/>
<dbReference type="KEGG" id="ssc:396994"/>
<dbReference type="CTD" id="113829"/>
<dbReference type="VGNC" id="VGNC:93069">
    <property type="gene designation" value="SLC35A4"/>
</dbReference>
<dbReference type="eggNOG" id="KOG2234">
    <property type="taxonomic scope" value="Eukaryota"/>
</dbReference>
<dbReference type="GeneTree" id="ENSGT00950000182827"/>
<dbReference type="HOGENOM" id="CLU_024645_5_1_1"/>
<dbReference type="InParanoid" id="Q8MIA3"/>
<dbReference type="OMA" id="SSCVVMI"/>
<dbReference type="OrthoDB" id="419167at2759"/>
<dbReference type="TreeFam" id="TF315345"/>
<dbReference type="Proteomes" id="UP000008227">
    <property type="component" value="Chromosome 2"/>
</dbReference>
<dbReference type="Proteomes" id="UP000314985">
    <property type="component" value="Unplaced"/>
</dbReference>
<dbReference type="Proteomes" id="UP000694570">
    <property type="component" value="Unplaced"/>
</dbReference>
<dbReference type="Proteomes" id="UP000694571">
    <property type="component" value="Unplaced"/>
</dbReference>
<dbReference type="Proteomes" id="UP000694720">
    <property type="component" value="Unplaced"/>
</dbReference>
<dbReference type="Proteomes" id="UP000694722">
    <property type="component" value="Unplaced"/>
</dbReference>
<dbReference type="Proteomes" id="UP000694723">
    <property type="component" value="Unplaced"/>
</dbReference>
<dbReference type="Proteomes" id="UP000694724">
    <property type="component" value="Unplaced"/>
</dbReference>
<dbReference type="Proteomes" id="UP000694725">
    <property type="component" value="Unplaced"/>
</dbReference>
<dbReference type="Proteomes" id="UP000694726">
    <property type="component" value="Unplaced"/>
</dbReference>
<dbReference type="Proteomes" id="UP000694727">
    <property type="component" value="Unplaced"/>
</dbReference>
<dbReference type="Proteomes" id="UP000694728">
    <property type="component" value="Unplaced"/>
</dbReference>
<dbReference type="Bgee" id="ENSSSCG00000014367">
    <property type="expression patterns" value="Expressed in testis and 41 other cell types or tissues"/>
</dbReference>
<dbReference type="GO" id="GO:0005794">
    <property type="term" value="C:Golgi apparatus"/>
    <property type="evidence" value="ECO:0000250"/>
    <property type="project" value="UniProtKB"/>
</dbReference>
<dbReference type="GO" id="GO:0000139">
    <property type="term" value="C:Golgi membrane"/>
    <property type="evidence" value="ECO:0000250"/>
    <property type="project" value="UniProtKB"/>
</dbReference>
<dbReference type="GO" id="GO:0015165">
    <property type="term" value="F:pyrimidine nucleotide-sugar transmembrane transporter activity"/>
    <property type="evidence" value="ECO:0007669"/>
    <property type="project" value="InterPro"/>
</dbReference>
<dbReference type="GO" id="GO:0022857">
    <property type="term" value="F:transmembrane transporter activity"/>
    <property type="evidence" value="ECO:0000318"/>
    <property type="project" value="GO_Central"/>
</dbReference>
<dbReference type="GO" id="GO:0055085">
    <property type="term" value="P:transmembrane transport"/>
    <property type="evidence" value="ECO:0000318"/>
    <property type="project" value="GO_Central"/>
</dbReference>
<dbReference type="InterPro" id="IPR007271">
    <property type="entry name" value="Nuc_sug_transpt"/>
</dbReference>
<dbReference type="PANTHER" id="PTHR10231">
    <property type="entry name" value="NUCLEOTIDE-SUGAR TRANSMEMBRANE TRANSPORTER"/>
    <property type="match status" value="1"/>
</dbReference>
<dbReference type="Pfam" id="PF04142">
    <property type="entry name" value="Nuc_sug_transp"/>
    <property type="match status" value="1"/>
</dbReference>
<dbReference type="PIRSF" id="PIRSF005799">
    <property type="entry name" value="UDP-gal_transpt"/>
    <property type="match status" value="1"/>
</dbReference>
<dbReference type="SUPFAM" id="SSF103481">
    <property type="entry name" value="Multidrug resistance efflux transporter EmrE"/>
    <property type="match status" value="1"/>
</dbReference>
<evidence type="ECO:0000250" key="1">
    <source>
        <dbReference type="UniProtKB" id="Q91ZR7"/>
    </source>
</evidence>
<evidence type="ECO:0000250" key="2">
    <source>
        <dbReference type="UniProtKB" id="Q96G79"/>
    </source>
</evidence>
<evidence type="ECO:0000255" key="3"/>
<evidence type="ECO:0000303" key="4">
    <source>
    </source>
</evidence>
<evidence type="ECO:0000305" key="5"/>
<keyword id="KW-0333">Golgi apparatus</keyword>
<keyword id="KW-0472">Membrane</keyword>
<keyword id="KW-1185">Reference proteome</keyword>
<keyword id="KW-0762">Sugar transport</keyword>
<keyword id="KW-0812">Transmembrane</keyword>
<keyword id="KW-1133">Transmembrane helix</keyword>
<keyword id="KW-0813">Transport</keyword>
<organism>
    <name type="scientific">Sus scrofa</name>
    <name type="common">Pig</name>
    <dbReference type="NCBI Taxonomy" id="9823"/>
    <lineage>
        <taxon>Eukaryota</taxon>
        <taxon>Metazoa</taxon>
        <taxon>Chordata</taxon>
        <taxon>Craniata</taxon>
        <taxon>Vertebrata</taxon>
        <taxon>Euteleostomi</taxon>
        <taxon>Mammalia</taxon>
        <taxon>Eutheria</taxon>
        <taxon>Laurasiatheria</taxon>
        <taxon>Artiodactyla</taxon>
        <taxon>Suina</taxon>
        <taxon>Suidae</taxon>
        <taxon>Sus</taxon>
    </lineage>
</organism>
<name>S35A4_PIG</name>